<comment type="function">
    <text evidence="4">Plays a key role in regulating the relative amounts of cyclic and non-cyclic electron flow to meet the demands of the plant for ATP and reducing power.</text>
</comment>
<comment type="catalytic activity">
    <reaction evidence="4">
        <text>2 reduced [2Fe-2S]-[ferredoxin] + NADP(+) + H(+) = 2 oxidized [2Fe-2S]-[ferredoxin] + NADPH</text>
        <dbReference type="Rhea" id="RHEA:20125"/>
        <dbReference type="Rhea" id="RHEA-COMP:10000"/>
        <dbReference type="Rhea" id="RHEA-COMP:10001"/>
        <dbReference type="ChEBI" id="CHEBI:15378"/>
        <dbReference type="ChEBI" id="CHEBI:33737"/>
        <dbReference type="ChEBI" id="CHEBI:33738"/>
        <dbReference type="ChEBI" id="CHEBI:57783"/>
        <dbReference type="ChEBI" id="CHEBI:58349"/>
        <dbReference type="EC" id="1.18.1.2"/>
    </reaction>
</comment>
<comment type="cofactor">
    <cofactor evidence="4">
        <name>FAD</name>
        <dbReference type="ChEBI" id="CHEBI:57692"/>
    </cofactor>
</comment>
<comment type="pathway">
    <text evidence="4">Energy metabolism; photosynthesis.</text>
</comment>
<comment type="subunit">
    <text evidence="4 7">Heterodimer with LFNR1 (By similarity). Component of high molecular weight thylakoid LFNRs-containing protein complexes containing LIR1, LFNR1, LFNR2, TIC62 and TROL proteins. Interacts directly with LIR1 and TIC62; LIR1 increases the affinity of LFNR1 and LFNR2 for TIC62 (PubMed:26941088).</text>
</comment>
<comment type="subcellular location">
    <subcellularLocation>
        <location evidence="4">Plastid</location>
        <location evidence="4">Chloroplast stroma</location>
    </subcellularLocation>
    <subcellularLocation>
        <location evidence="4">Plastid</location>
        <location evidence="4">Chloroplast thylakoid membrane</location>
        <topology evidence="4">Peripheral membrane protein</topology>
        <orientation evidence="4">Stromal side</orientation>
    </subcellularLocation>
</comment>
<comment type="PTM">
    <text evidence="7">May form interchain disulfide bonds with LIR1.</text>
</comment>
<comment type="similarity">
    <text evidence="9">Belongs to the ferredoxin--NADP reductase type 1 family.</text>
</comment>
<sequence>MAAVNTVSSLPCSKAGAAVAGGAPRPSTCSVFYPPRCWSKRSSGNGVRAQASTTETTAAPAAEVTTKVEKVSKKQVDGVVTNKYRPKEPYTGRCLLNTRITGDDAPGETWHMVFSTDGEIPYREGQSIGVIPDGIDKNGKPHKLRLYSIASSAIGDFADSKTVSLCVKRLVYTNDQGEIVKGVCSNFLCDLKPGSDVKITGPVGKEMLMPKDPNATIIMLGTGTGIAPFRSFLWKMFFEEHDDYKFNGLAWLFLGVPTSSTLLYREEFERMKEIAPERFRLDFAVSREQTNAAGEKMYIQTRMAEYKDELWELLKKDNTYVYMCGLKGMEKGIDDIMIDLAAKDGIDWLDYKKQLKKSEQWNVEVY</sequence>
<gene>
    <name evidence="8" type="primary">LFNR2</name>
    <name evidence="9" type="ordered locus">LOC_Os02g01340</name>
    <name evidence="9" type="ordered locus">Os02g0103800</name>
    <name evidence="10" type="ORF">OJ1435_F07.32-2</name>
    <name evidence="12" type="ORF">OsJ_05011</name>
    <name evidence="11" type="ORF">OSNPB_020103800</name>
</gene>
<accession>Q6ZFJ3</accession>
<proteinExistence type="evidence at protein level"/>
<feature type="transit peptide" description="Chloroplast" evidence="5">
    <location>
        <begin position="1"/>
        <end position="48"/>
    </location>
</feature>
<feature type="chain" id="PRO_0000442379" description="Ferredoxin--NADP reductase, leaf isozyme 2, chloroplastic">
    <location>
        <begin position="49"/>
        <end position="366"/>
    </location>
</feature>
<feature type="domain" description="FAD-binding FR-type" evidence="6">
    <location>
        <begin position="87"/>
        <end position="209"/>
    </location>
</feature>
<feature type="binding site" evidence="3">
    <location>
        <begin position="145"/>
        <end position="148"/>
    </location>
    <ligand>
        <name>FAD</name>
        <dbReference type="ChEBI" id="CHEBI:57692"/>
    </ligand>
</feature>
<feature type="binding site" evidence="3">
    <location>
        <position position="148"/>
    </location>
    <ligand>
        <name>NADP(+)</name>
        <dbReference type="ChEBI" id="CHEBI:58349"/>
    </ligand>
</feature>
<feature type="binding site" evidence="3">
    <location>
        <begin position="166"/>
        <end position="168"/>
    </location>
    <ligand>
        <name>FAD</name>
        <dbReference type="ChEBI" id="CHEBI:57692"/>
    </ligand>
</feature>
<feature type="binding site" evidence="3">
    <location>
        <position position="168"/>
    </location>
    <ligand>
        <name>NADP(+)</name>
        <dbReference type="ChEBI" id="CHEBI:58349"/>
    </ligand>
</feature>
<feature type="binding site" evidence="3">
    <location>
        <position position="172"/>
    </location>
    <ligand>
        <name>FAD</name>
        <dbReference type="ChEBI" id="CHEBI:57692"/>
    </ligand>
</feature>
<feature type="binding site" evidence="3">
    <location>
        <begin position="183"/>
        <end position="185"/>
    </location>
    <ligand>
        <name>FAD</name>
        <dbReference type="ChEBI" id="CHEBI:57692"/>
    </ligand>
</feature>
<feature type="binding site" evidence="2">
    <location>
        <position position="224"/>
    </location>
    <ligand>
        <name>FAD</name>
        <dbReference type="ChEBI" id="CHEBI:57692"/>
    </ligand>
</feature>
<feature type="binding site" evidence="3">
    <location>
        <position position="224"/>
    </location>
    <ligand>
        <name>NADP(+)</name>
        <dbReference type="ChEBI" id="CHEBI:58349"/>
    </ligand>
</feature>
<feature type="binding site" evidence="3">
    <location>
        <begin position="256"/>
        <end position="257"/>
    </location>
    <ligand>
        <name>NADP(+)</name>
        <dbReference type="ChEBI" id="CHEBI:58349"/>
    </ligand>
</feature>
<feature type="binding site" evidence="3">
    <location>
        <begin position="286"/>
        <end position="287"/>
    </location>
    <ligand>
        <name>NADP(+)</name>
        <dbReference type="ChEBI" id="CHEBI:58349"/>
    </ligand>
</feature>
<feature type="binding site" evidence="3">
    <location>
        <position position="296"/>
    </location>
    <ligand>
        <name>NADP(+)</name>
        <dbReference type="ChEBI" id="CHEBI:58349"/>
    </ligand>
</feature>
<feature type="binding site" evidence="3">
    <location>
        <begin position="325"/>
        <end position="326"/>
    </location>
    <ligand>
        <name>NADP(+)</name>
        <dbReference type="ChEBI" id="CHEBI:58349"/>
    </ligand>
</feature>
<feature type="binding site" evidence="3">
    <location>
        <position position="364"/>
    </location>
    <ligand>
        <name>NADP(+)</name>
        <dbReference type="ChEBI" id="CHEBI:58349"/>
    </ligand>
</feature>
<feature type="modified residue" description="Phosphoserine" evidence="4">
    <location>
        <position position="185"/>
    </location>
</feature>
<feature type="modified residue" description="Phosphothreonine" evidence="4">
    <location>
        <position position="216"/>
    </location>
</feature>
<feature type="disulfide bond" evidence="1">
    <location>
        <begin position="184"/>
        <end position="189"/>
    </location>
</feature>
<name>FENR2_ORYSJ</name>
<reference key="1">
    <citation type="journal article" date="2005" name="Nature">
        <title>The map-based sequence of the rice genome.</title>
        <authorList>
            <consortium name="International rice genome sequencing project (IRGSP)"/>
        </authorList>
    </citation>
    <scope>NUCLEOTIDE SEQUENCE [LARGE SCALE GENOMIC DNA]</scope>
    <source>
        <strain>cv. Nipponbare</strain>
    </source>
</reference>
<reference key="2">
    <citation type="journal article" date="2013" name="Rice">
        <title>Improvement of the Oryza sativa Nipponbare reference genome using next generation sequence and optical map data.</title>
        <authorList>
            <person name="Kawahara Y."/>
            <person name="de la Bastide M."/>
            <person name="Hamilton J.P."/>
            <person name="Kanamori H."/>
            <person name="McCombie W.R."/>
            <person name="Ouyang S."/>
            <person name="Schwartz D.C."/>
            <person name="Tanaka T."/>
            <person name="Wu J."/>
            <person name="Zhou S."/>
            <person name="Childs K.L."/>
            <person name="Davidson R.M."/>
            <person name="Lin H."/>
            <person name="Quesada-Ocampo L."/>
            <person name="Vaillancourt B."/>
            <person name="Sakai H."/>
            <person name="Lee S.S."/>
            <person name="Kim J."/>
            <person name="Numa H."/>
            <person name="Itoh T."/>
            <person name="Buell C.R."/>
            <person name="Matsumoto T."/>
        </authorList>
    </citation>
    <scope>GENOME REANNOTATION</scope>
    <source>
        <strain>cv. Nipponbare</strain>
    </source>
</reference>
<reference key="3">
    <citation type="journal article" date="2005" name="PLoS Biol.">
        <title>The genomes of Oryza sativa: a history of duplications.</title>
        <authorList>
            <person name="Yu J."/>
            <person name="Wang J."/>
            <person name="Lin W."/>
            <person name="Li S."/>
            <person name="Li H."/>
            <person name="Zhou J."/>
            <person name="Ni P."/>
            <person name="Dong W."/>
            <person name="Hu S."/>
            <person name="Zeng C."/>
            <person name="Zhang J."/>
            <person name="Zhang Y."/>
            <person name="Li R."/>
            <person name="Xu Z."/>
            <person name="Li S."/>
            <person name="Li X."/>
            <person name="Zheng H."/>
            <person name="Cong L."/>
            <person name="Lin L."/>
            <person name="Yin J."/>
            <person name="Geng J."/>
            <person name="Li G."/>
            <person name="Shi J."/>
            <person name="Liu J."/>
            <person name="Lv H."/>
            <person name="Li J."/>
            <person name="Wang J."/>
            <person name="Deng Y."/>
            <person name="Ran L."/>
            <person name="Shi X."/>
            <person name="Wang X."/>
            <person name="Wu Q."/>
            <person name="Li C."/>
            <person name="Ren X."/>
            <person name="Wang J."/>
            <person name="Wang X."/>
            <person name="Li D."/>
            <person name="Liu D."/>
            <person name="Zhang X."/>
            <person name="Ji Z."/>
            <person name="Zhao W."/>
            <person name="Sun Y."/>
            <person name="Zhang Z."/>
            <person name="Bao J."/>
            <person name="Han Y."/>
            <person name="Dong L."/>
            <person name="Ji J."/>
            <person name="Chen P."/>
            <person name="Wu S."/>
            <person name="Liu J."/>
            <person name="Xiao Y."/>
            <person name="Bu D."/>
            <person name="Tan J."/>
            <person name="Yang L."/>
            <person name="Ye C."/>
            <person name="Zhang J."/>
            <person name="Xu J."/>
            <person name="Zhou Y."/>
            <person name="Yu Y."/>
            <person name="Zhang B."/>
            <person name="Zhuang S."/>
            <person name="Wei H."/>
            <person name="Liu B."/>
            <person name="Lei M."/>
            <person name="Yu H."/>
            <person name="Li Y."/>
            <person name="Xu H."/>
            <person name="Wei S."/>
            <person name="He X."/>
            <person name="Fang L."/>
            <person name="Zhang Z."/>
            <person name="Zhang Y."/>
            <person name="Huang X."/>
            <person name="Su Z."/>
            <person name="Tong W."/>
            <person name="Li J."/>
            <person name="Tong Z."/>
            <person name="Li S."/>
            <person name="Ye J."/>
            <person name="Wang L."/>
            <person name="Fang L."/>
            <person name="Lei T."/>
            <person name="Chen C.-S."/>
            <person name="Chen H.-C."/>
            <person name="Xu Z."/>
            <person name="Li H."/>
            <person name="Huang H."/>
            <person name="Zhang F."/>
            <person name="Xu H."/>
            <person name="Li N."/>
            <person name="Zhao C."/>
            <person name="Li S."/>
            <person name="Dong L."/>
            <person name="Huang Y."/>
            <person name="Li L."/>
            <person name="Xi Y."/>
            <person name="Qi Q."/>
            <person name="Li W."/>
            <person name="Zhang B."/>
            <person name="Hu W."/>
            <person name="Zhang Y."/>
            <person name="Tian X."/>
            <person name="Jiao Y."/>
            <person name="Liang X."/>
            <person name="Jin J."/>
            <person name="Gao L."/>
            <person name="Zheng W."/>
            <person name="Hao B."/>
            <person name="Liu S.-M."/>
            <person name="Wang W."/>
            <person name="Yuan L."/>
            <person name="Cao M."/>
            <person name="McDermott J."/>
            <person name="Samudrala R."/>
            <person name="Wang J."/>
            <person name="Wong G.K.-S."/>
            <person name="Yang H."/>
        </authorList>
    </citation>
    <scope>NUCLEOTIDE SEQUENCE [LARGE SCALE GENOMIC DNA]</scope>
    <source>
        <strain>cv. Nipponbare</strain>
    </source>
</reference>
<reference key="4">
    <citation type="journal article" date="2003" name="Science">
        <title>Collection, mapping, and annotation of over 28,000 cDNA clones from japonica rice.</title>
        <authorList>
            <consortium name="The rice full-length cDNA consortium"/>
        </authorList>
    </citation>
    <scope>NUCLEOTIDE SEQUENCE [LARGE SCALE MRNA]</scope>
    <source>
        <strain>cv. Nipponbare</strain>
    </source>
</reference>
<reference key="5">
    <citation type="journal article" date="2016" name="Plant Cell">
        <title>LIGHT-INDUCED RICE1 regulates light-dependent attachment of LEAF-TYPE FERREDOXIN-NADP+ OXIDOREDUCTASE to the thylakoid membrane in rice and Arabidopsis.</title>
        <authorList>
            <person name="Yang C."/>
            <person name="Hu H."/>
            <person name="Ren H."/>
            <person name="Kong Y."/>
            <person name="Lin H."/>
            <person name="Guo J."/>
            <person name="Wang L."/>
            <person name="He Y."/>
            <person name="Ding X."/>
            <person name="Grabsztunowicz M."/>
            <person name="Mulo P."/>
            <person name="Chen T."/>
            <person name="Liu Y."/>
            <person name="Wu Z."/>
            <person name="Wu Y."/>
            <person name="Mao C."/>
            <person name="Wu P."/>
            <person name="Mo X."/>
        </authorList>
    </citation>
    <scope>INTERACTION WITH LIR1 AND TIC62</scope>
    <scope>DISULFIDE BOND</scope>
    <source>
        <strain>cv. Nipponbare</strain>
    </source>
</reference>
<dbReference type="EC" id="1.18.1.2" evidence="4"/>
<dbReference type="EMBL" id="AP004187">
    <property type="protein sequence ID" value="BAD07827.1"/>
    <property type="molecule type" value="Genomic_DNA"/>
</dbReference>
<dbReference type="EMBL" id="AP014958">
    <property type="protein sequence ID" value="BAS76543.1"/>
    <property type="molecule type" value="Genomic_DNA"/>
</dbReference>
<dbReference type="EMBL" id="CM000139">
    <property type="protein sequence ID" value="EAZ21407.1"/>
    <property type="molecule type" value="Genomic_DNA"/>
</dbReference>
<dbReference type="EMBL" id="AK065309">
    <property type="protein sequence ID" value="BAG89459.1"/>
    <property type="molecule type" value="mRNA"/>
</dbReference>
<dbReference type="SMR" id="Q6ZFJ3"/>
<dbReference type="FunCoup" id="Q6ZFJ3">
    <property type="interactions" value="821"/>
</dbReference>
<dbReference type="STRING" id="39947.Q6ZFJ3"/>
<dbReference type="PaxDb" id="39947-Q6ZFJ3"/>
<dbReference type="EnsemblPlants" id="Os02t0103800-01">
    <property type="protein sequence ID" value="Os02t0103800-01"/>
    <property type="gene ID" value="Os02g0103800"/>
</dbReference>
<dbReference type="EnsemblPlants" id="Os02t0103800-03">
    <property type="protein sequence ID" value="Os02t0103800-03"/>
    <property type="gene ID" value="Os02g0103800"/>
</dbReference>
<dbReference type="Gramene" id="Os02t0103800-01">
    <property type="protein sequence ID" value="Os02t0103800-01"/>
    <property type="gene ID" value="Os02g0103800"/>
</dbReference>
<dbReference type="Gramene" id="Os02t0103800-03">
    <property type="protein sequence ID" value="Os02t0103800-03"/>
    <property type="gene ID" value="Os02g0103800"/>
</dbReference>
<dbReference type="KEGG" id="osa:4328000"/>
<dbReference type="eggNOG" id="KOG1158">
    <property type="taxonomic scope" value="Eukaryota"/>
</dbReference>
<dbReference type="InParanoid" id="Q6ZFJ3"/>
<dbReference type="OrthoDB" id="1688044at2759"/>
<dbReference type="BRENDA" id="1.18.1.2">
    <property type="organism ID" value="8948"/>
</dbReference>
<dbReference type="UniPathway" id="UPA00091"/>
<dbReference type="Proteomes" id="UP000000763">
    <property type="component" value="Chromosome 2"/>
</dbReference>
<dbReference type="Proteomes" id="UP000007752">
    <property type="component" value="Chromosome 2"/>
</dbReference>
<dbReference type="Proteomes" id="UP000059680">
    <property type="component" value="Chromosome 2"/>
</dbReference>
<dbReference type="ExpressionAtlas" id="Q6ZFJ3">
    <property type="expression patterns" value="baseline and differential"/>
</dbReference>
<dbReference type="GO" id="GO:0009570">
    <property type="term" value="C:chloroplast stroma"/>
    <property type="evidence" value="ECO:0007669"/>
    <property type="project" value="UniProtKB-SubCell"/>
</dbReference>
<dbReference type="GO" id="GO:0098807">
    <property type="term" value="C:chloroplast thylakoid membrane protein complex"/>
    <property type="evidence" value="ECO:0000314"/>
    <property type="project" value="UniProtKB"/>
</dbReference>
<dbReference type="GO" id="GO:0009055">
    <property type="term" value="F:electron transfer activity"/>
    <property type="evidence" value="ECO:0000318"/>
    <property type="project" value="GO_Central"/>
</dbReference>
<dbReference type="GO" id="GO:0004324">
    <property type="term" value="F:ferredoxin-NADP+ reductase activity"/>
    <property type="evidence" value="ECO:0007669"/>
    <property type="project" value="UniProtKB-EC"/>
</dbReference>
<dbReference type="GO" id="GO:0022900">
    <property type="term" value="P:electron transport chain"/>
    <property type="evidence" value="ECO:0000318"/>
    <property type="project" value="GO_Central"/>
</dbReference>
<dbReference type="GO" id="GO:0015979">
    <property type="term" value="P:photosynthesis"/>
    <property type="evidence" value="ECO:0007669"/>
    <property type="project" value="UniProtKB-UniPathway"/>
</dbReference>
<dbReference type="CDD" id="cd06208">
    <property type="entry name" value="CYPOR_like_FNR"/>
    <property type="match status" value="1"/>
</dbReference>
<dbReference type="FunFam" id="2.40.30.10:FF:000048">
    <property type="entry name" value="Ferredoxin--NADP reductase, chloroplastic"/>
    <property type="match status" value="1"/>
</dbReference>
<dbReference type="FunFam" id="3.40.50.80:FF:000008">
    <property type="entry name" value="Ferredoxin--NADP reductase, chloroplastic"/>
    <property type="match status" value="1"/>
</dbReference>
<dbReference type="Gene3D" id="3.40.50.80">
    <property type="entry name" value="Nucleotide-binding domain of ferredoxin-NADP reductase (FNR) module"/>
    <property type="match status" value="1"/>
</dbReference>
<dbReference type="Gene3D" id="2.40.30.10">
    <property type="entry name" value="Translation factors"/>
    <property type="match status" value="1"/>
</dbReference>
<dbReference type="InterPro" id="IPR017927">
    <property type="entry name" value="FAD-bd_FR_type"/>
</dbReference>
<dbReference type="InterPro" id="IPR001709">
    <property type="entry name" value="Flavoprot_Pyr_Nucl_cyt_Rdtase"/>
</dbReference>
<dbReference type="InterPro" id="IPR015701">
    <property type="entry name" value="FNR"/>
</dbReference>
<dbReference type="InterPro" id="IPR039261">
    <property type="entry name" value="FNR_nucleotide-bd"/>
</dbReference>
<dbReference type="InterPro" id="IPR035442">
    <property type="entry name" value="FNR_plant_Cyanobacteria"/>
</dbReference>
<dbReference type="InterPro" id="IPR001433">
    <property type="entry name" value="OxRdtase_FAD/NAD-bd"/>
</dbReference>
<dbReference type="InterPro" id="IPR017938">
    <property type="entry name" value="Riboflavin_synthase-like_b-brl"/>
</dbReference>
<dbReference type="PANTHER" id="PTHR43314">
    <property type="match status" value="1"/>
</dbReference>
<dbReference type="Pfam" id="PF00175">
    <property type="entry name" value="NAD_binding_1"/>
    <property type="match status" value="1"/>
</dbReference>
<dbReference type="PIRSF" id="PIRSF501178">
    <property type="entry name" value="FNR-PetH"/>
    <property type="match status" value="1"/>
</dbReference>
<dbReference type="PIRSF" id="PIRSF000361">
    <property type="entry name" value="Frd-NADP+_RD"/>
    <property type="match status" value="1"/>
</dbReference>
<dbReference type="PRINTS" id="PR00371">
    <property type="entry name" value="FPNCR"/>
</dbReference>
<dbReference type="SUPFAM" id="SSF52343">
    <property type="entry name" value="Ferredoxin reductase-like, C-terminal NADP-linked domain"/>
    <property type="match status" value="1"/>
</dbReference>
<dbReference type="SUPFAM" id="SSF63380">
    <property type="entry name" value="Riboflavin synthase domain-like"/>
    <property type="match status" value="1"/>
</dbReference>
<dbReference type="PROSITE" id="PS51384">
    <property type="entry name" value="FAD_FR"/>
    <property type="match status" value="1"/>
</dbReference>
<evidence type="ECO:0000250" key="1"/>
<evidence type="ECO:0000250" key="2">
    <source>
        <dbReference type="UniProtKB" id="P00455"/>
    </source>
</evidence>
<evidence type="ECO:0000250" key="3">
    <source>
        <dbReference type="UniProtKB" id="P10933"/>
    </source>
</evidence>
<evidence type="ECO:0000250" key="4">
    <source>
        <dbReference type="UniProtKB" id="Q9FKW6"/>
    </source>
</evidence>
<evidence type="ECO:0000255" key="5"/>
<evidence type="ECO:0000255" key="6">
    <source>
        <dbReference type="PROSITE-ProRule" id="PRU00716"/>
    </source>
</evidence>
<evidence type="ECO:0000269" key="7">
    <source>
    </source>
</evidence>
<evidence type="ECO:0000303" key="8">
    <source>
    </source>
</evidence>
<evidence type="ECO:0000305" key="9"/>
<evidence type="ECO:0000312" key="10">
    <source>
        <dbReference type="EMBL" id="BAD07827.1"/>
    </source>
</evidence>
<evidence type="ECO:0000312" key="11">
    <source>
        <dbReference type="EMBL" id="BAS76543.1"/>
    </source>
</evidence>
<evidence type="ECO:0000312" key="12">
    <source>
        <dbReference type="EMBL" id="EAZ21407.1"/>
    </source>
</evidence>
<keyword id="KW-0150">Chloroplast</keyword>
<keyword id="KW-1015">Disulfide bond</keyword>
<keyword id="KW-0249">Electron transport</keyword>
<keyword id="KW-0274">FAD</keyword>
<keyword id="KW-0285">Flavoprotein</keyword>
<keyword id="KW-0472">Membrane</keyword>
<keyword id="KW-0521">NADP</keyword>
<keyword id="KW-0560">Oxidoreductase</keyword>
<keyword id="KW-0597">Phosphoprotein</keyword>
<keyword id="KW-0602">Photosynthesis</keyword>
<keyword id="KW-0934">Plastid</keyword>
<keyword id="KW-1185">Reference proteome</keyword>
<keyword id="KW-0793">Thylakoid</keyword>
<keyword id="KW-0809">Transit peptide</keyword>
<keyword id="KW-0813">Transport</keyword>
<organism>
    <name type="scientific">Oryza sativa subsp. japonica</name>
    <name type="common">Rice</name>
    <dbReference type="NCBI Taxonomy" id="39947"/>
    <lineage>
        <taxon>Eukaryota</taxon>
        <taxon>Viridiplantae</taxon>
        <taxon>Streptophyta</taxon>
        <taxon>Embryophyta</taxon>
        <taxon>Tracheophyta</taxon>
        <taxon>Spermatophyta</taxon>
        <taxon>Magnoliopsida</taxon>
        <taxon>Liliopsida</taxon>
        <taxon>Poales</taxon>
        <taxon>Poaceae</taxon>
        <taxon>BOP clade</taxon>
        <taxon>Oryzoideae</taxon>
        <taxon>Oryzeae</taxon>
        <taxon>Oryzinae</taxon>
        <taxon>Oryza</taxon>
        <taxon>Oryza sativa</taxon>
    </lineage>
</organism>
<protein>
    <recommendedName>
        <fullName>Ferredoxin--NADP reductase, leaf isozyme 2, chloroplastic</fullName>
        <ecNumber evidence="4">1.18.1.2</ecNumber>
    </recommendedName>
    <alternativeName>
        <fullName evidence="8">Leaf FNR 2</fullName>
        <shortName evidence="8">FNR-2</shortName>
        <shortName evidence="8">Os-LFNR2</shortName>
    </alternativeName>
</protein>